<accession>B5BIJ2</accession>
<gene>
    <name evidence="1" type="primary">ibpA</name>
    <name type="ordered locus">SSPA3417</name>
</gene>
<evidence type="ECO:0000255" key="1">
    <source>
        <dbReference type="HAMAP-Rule" id="MF_02000"/>
    </source>
</evidence>
<evidence type="ECO:0000255" key="2">
    <source>
        <dbReference type="PROSITE-ProRule" id="PRU00285"/>
    </source>
</evidence>
<name>IBPA_SALPK</name>
<feature type="chain" id="PRO_1000189089" description="Small heat shock protein IbpA">
    <location>
        <begin position="1"/>
        <end position="137"/>
    </location>
</feature>
<feature type="domain" description="sHSP" evidence="2">
    <location>
        <begin position="28"/>
        <end position="137"/>
    </location>
</feature>
<organism>
    <name type="scientific">Salmonella paratyphi A (strain AKU_12601)</name>
    <dbReference type="NCBI Taxonomy" id="554290"/>
    <lineage>
        <taxon>Bacteria</taxon>
        <taxon>Pseudomonadati</taxon>
        <taxon>Pseudomonadota</taxon>
        <taxon>Gammaproteobacteria</taxon>
        <taxon>Enterobacterales</taxon>
        <taxon>Enterobacteriaceae</taxon>
        <taxon>Salmonella</taxon>
    </lineage>
</organism>
<reference key="1">
    <citation type="journal article" date="2009" name="BMC Genomics">
        <title>Pseudogene accumulation in the evolutionary histories of Salmonella enterica serovars Paratyphi A and Typhi.</title>
        <authorList>
            <person name="Holt K.E."/>
            <person name="Thomson N.R."/>
            <person name="Wain J."/>
            <person name="Langridge G.C."/>
            <person name="Hasan R."/>
            <person name="Bhutta Z.A."/>
            <person name="Quail M.A."/>
            <person name="Norbertczak H."/>
            <person name="Walker D."/>
            <person name="Simmonds M."/>
            <person name="White B."/>
            <person name="Bason N."/>
            <person name="Mungall K."/>
            <person name="Dougan G."/>
            <person name="Parkhill J."/>
        </authorList>
    </citation>
    <scope>NUCLEOTIDE SEQUENCE [LARGE SCALE GENOMIC DNA]</scope>
    <source>
        <strain>AKU_12601</strain>
    </source>
</reference>
<proteinExistence type="inferred from homology"/>
<keyword id="KW-0143">Chaperone</keyword>
<keyword id="KW-0963">Cytoplasm</keyword>
<keyword id="KW-0346">Stress response</keyword>
<sequence length="137" mass="15750">MRNFDLSPLYRSAIGFDRLFNLLENNQSQSNGGYPPYNVELVDENHYRIAIAVAGFAESELEITAQDNLLVVKGAHADEQKERTYLYQGIAERNFERKFQLAENIHVRGANLVNGLLYIELERVIPEANKPRRIEIN</sequence>
<protein>
    <recommendedName>
        <fullName evidence="1">Small heat shock protein IbpA</fullName>
    </recommendedName>
    <alternativeName>
        <fullName evidence="1">16 kDa heat shock protein A</fullName>
    </alternativeName>
</protein>
<dbReference type="EMBL" id="FM200053">
    <property type="protein sequence ID" value="CAR61689.1"/>
    <property type="molecule type" value="Genomic_DNA"/>
</dbReference>
<dbReference type="RefSeq" id="WP_001532742.1">
    <property type="nucleotide sequence ID" value="NC_011147.1"/>
</dbReference>
<dbReference type="SMR" id="B5BIJ2"/>
<dbReference type="GeneID" id="84234411"/>
<dbReference type="KEGG" id="sek:SSPA3417"/>
<dbReference type="HOGENOM" id="CLU_046737_4_2_6"/>
<dbReference type="Proteomes" id="UP000001869">
    <property type="component" value="Chromosome"/>
</dbReference>
<dbReference type="GO" id="GO:0005737">
    <property type="term" value="C:cytoplasm"/>
    <property type="evidence" value="ECO:0007669"/>
    <property type="project" value="UniProtKB-SubCell"/>
</dbReference>
<dbReference type="GO" id="GO:0050821">
    <property type="term" value="P:protein stabilization"/>
    <property type="evidence" value="ECO:0007669"/>
    <property type="project" value="UniProtKB-UniRule"/>
</dbReference>
<dbReference type="CDD" id="cd06470">
    <property type="entry name" value="ACD_IbpA-B_like"/>
    <property type="match status" value="1"/>
</dbReference>
<dbReference type="FunFam" id="2.60.40.790:FF:000002">
    <property type="entry name" value="Small heat shock protein IbpA"/>
    <property type="match status" value="1"/>
</dbReference>
<dbReference type="Gene3D" id="2.60.40.790">
    <property type="match status" value="1"/>
</dbReference>
<dbReference type="HAMAP" id="MF_02000">
    <property type="entry name" value="HSP20_IbpA"/>
    <property type="match status" value="1"/>
</dbReference>
<dbReference type="InterPro" id="IPR002068">
    <property type="entry name" value="A-crystallin/Hsp20_dom"/>
</dbReference>
<dbReference type="InterPro" id="IPR037913">
    <property type="entry name" value="ACD_IbpA/B"/>
</dbReference>
<dbReference type="InterPro" id="IPR008978">
    <property type="entry name" value="HSP20-like_chaperone"/>
</dbReference>
<dbReference type="InterPro" id="IPR023728">
    <property type="entry name" value="HSP20_IbpA"/>
</dbReference>
<dbReference type="NCBIfam" id="NF008013">
    <property type="entry name" value="PRK10743.1"/>
    <property type="match status" value="1"/>
</dbReference>
<dbReference type="PANTHER" id="PTHR47062">
    <property type="match status" value="1"/>
</dbReference>
<dbReference type="PANTHER" id="PTHR47062:SF1">
    <property type="entry name" value="SMALL HEAT SHOCK PROTEIN IBPA"/>
    <property type="match status" value="1"/>
</dbReference>
<dbReference type="Pfam" id="PF00011">
    <property type="entry name" value="HSP20"/>
    <property type="match status" value="1"/>
</dbReference>
<dbReference type="SUPFAM" id="SSF49764">
    <property type="entry name" value="HSP20-like chaperones"/>
    <property type="match status" value="1"/>
</dbReference>
<dbReference type="PROSITE" id="PS01031">
    <property type="entry name" value="SHSP"/>
    <property type="match status" value="1"/>
</dbReference>
<comment type="function">
    <text evidence="1">Associates with aggregated proteins, together with IbpB, to stabilize and protect them from irreversible denaturation and extensive proteolysis during heat shock and oxidative stress. Aggregated proteins bound to the IbpAB complex are more efficiently refolded and reactivated by the ATP-dependent chaperone systems ClpB and DnaK/DnaJ/GrpE. Its activity is ATP-independent.</text>
</comment>
<comment type="subunit">
    <text evidence="1">Monomer. Forms homomultimers of about 100-150 subunits at optimal growth temperatures. Conformation changes to monomers at high temperatures or high ionic concentrations.</text>
</comment>
<comment type="subcellular location">
    <subcellularLocation>
        <location evidence="1">Cytoplasm</location>
    </subcellularLocation>
</comment>
<comment type="similarity">
    <text evidence="1 2">Belongs to the small heat shock protein (HSP20) family.</text>
</comment>